<gene>
    <name type="primary">ALG11</name>
    <name type="ordered locus">KLLA0F03817g</name>
</gene>
<feature type="chain" id="PRO_0000080276" description="GDP-Man:Man(3)GlcNAc(2)-PP-Dol alpha-1,2-mannosyltransferase">
    <location>
        <begin position="1"/>
        <end position="570"/>
    </location>
</feature>
<feature type="topological domain" description="Lumenal" evidence="1">
    <location>
        <begin position="1"/>
        <end position="7"/>
    </location>
</feature>
<feature type="transmembrane region" description="Helical" evidence="2">
    <location>
        <begin position="8"/>
        <end position="70"/>
    </location>
</feature>
<feature type="topological domain" description="Cytoplasmic" evidence="1">
    <location>
        <begin position="71"/>
        <end position="200"/>
    </location>
</feature>
<feature type="intramembrane region" description="Helical" evidence="2">
    <location>
        <begin position="201"/>
        <end position="221"/>
    </location>
</feature>
<feature type="topological domain" description="Cytoplasmic" evidence="1">
    <location>
        <begin position="222"/>
        <end position="446"/>
    </location>
</feature>
<feature type="intramembrane region" description="Helical" evidence="2">
    <location>
        <begin position="447"/>
        <end position="467"/>
    </location>
</feature>
<feature type="topological domain" description="Cytoplasmic" evidence="1">
    <location>
        <begin position="468"/>
        <end position="570"/>
    </location>
</feature>
<name>ALG11_KLULA</name>
<accession>Q6CLD6</accession>
<protein>
    <recommendedName>
        <fullName evidence="1">GDP-Man:Man(3)GlcNAc(2)-PP-Dol alpha-1,2-mannosyltransferase</fullName>
        <ecNumber evidence="1">2.4.1.131</ecNumber>
    </recommendedName>
    <alternativeName>
        <fullName>Alpha-1,2-mannosyltransferase ALG11</fullName>
    </alternativeName>
    <alternativeName>
        <fullName>Asparagine-linked glycosylation protein 11</fullName>
    </alternativeName>
    <alternativeName>
        <fullName>Glycolipid 2-alpha-mannosyltransferase</fullName>
    </alternativeName>
</protein>
<evidence type="ECO:0000250" key="1">
    <source>
        <dbReference type="UniProtKB" id="P53954"/>
    </source>
</evidence>
<evidence type="ECO:0000255" key="2"/>
<evidence type="ECO:0000305" key="3"/>
<sequence length="570" mass="65348">MKLADFVTYVFGSLLAGLVTLKVLSSFIPSLLVTLPAKVRLRVNNSLLKCSNNLNRIPVLDFGWKNSSVRRAFILASERPSDYTNKIYGDRVHIAYNDRIKRESFVNKLGFDSKRKLLGFFHPYCNAGGGGEKVLWKAVETSLNQDKNNICVIYTGDTDVNGSDILNSVRRRFEYDLDSDRIVFIFLQKRRLVESKSWPKFTLLGQAYGSIILSIEALTTLAPDYWIDTMGYPFAYPFVSLFARIPIVTYTHYPVISTDMLQKLKTMPGFHTNFKLIGKYVYWKIFMLAYKFSGLFVEIASTNSTWTYNHIKSIWSSTKNIHIIYPPCSTESLIEGCDKSDPVKRLNQAVVIAQFRPEKRHELILSSFSSFIDATTKKDLIPKIIFIGSTRNVEDREYVETLKKYAFEALKIPTHLVDFKTDCKYDDMKSILYSSWFGINAMWNEHFGIAVVEYMASGLIPLCHASAGPLYDIVVPWDSKKNEQSTDKANETGFFFIDETDPDFLAKDSSKYSSLRTLFAQVSKLNTVQRIDISNRAKMCSLSKFSDSEFERSWNEVLEELNLTHNRMFS</sequence>
<comment type="function">
    <text evidence="1">GDP-Man:Man(3)GlcNAc(2)-PP-Dol alpha-1,2-mannosyltransferase that operates in the biosynthetic pathway of dolichol-linked oligosaccharides, the glycan precursors employed in protein asparagine (N)-glycosylation. The assembly of dolichol-linked oligosaccharides begins on the cytosolic side of the endoplasmic reticulum membrane and finishes in its lumen. The sequential addition of sugars to dolichol pyrophosphate produces dolichol-linked oligosaccharides containing fourteen sugars, including two GlcNAcs, nine mannoses and three glucoses. Once assembled, the oligosaccharide is transferred from the lipid to nascent proteins by oligosaccharyltransferases. Catalyzes, on the cytoplasmic face of the endoplasmic reticulum, the addition of the fourth and fifth mannose residues to the dolichol-linked oligosaccharide chain, to produce Man(5)GlcNAc(2)-PP-dolichol core oligosaccharide.</text>
</comment>
<comment type="catalytic activity">
    <reaction evidence="1">
        <text>an alpha-D-Man-(1-&gt;3)-[alpha-D-Man-(1-&gt;6)]-beta-D-Man-(1-&gt;4)-beta-D-GlcNAc-(1-&gt;4)-alpha-D-GlcNAc-diphospho-di-trans,poly-cis-dolichol + 2 GDP-alpha-D-mannose = an alpha-D-Man-(1-&gt;2)-alpha-D-Man-(1-&gt;2)-alpha-D-Man-(1-&gt;3)-[alpha-D-Man-(1-&gt;6)]-beta-D-Man-(1-&gt;4)-beta-D-GlcNAc-(1-&gt;4)-alpha-D-GlcNAc-diphospho-di-trans,poly-cis-dolichol + 2 GDP + 2 H(+)</text>
        <dbReference type="Rhea" id="RHEA:29523"/>
        <dbReference type="Rhea" id="RHEA-COMP:19515"/>
        <dbReference type="Rhea" id="RHEA-COMP:19516"/>
        <dbReference type="ChEBI" id="CHEBI:15378"/>
        <dbReference type="ChEBI" id="CHEBI:57527"/>
        <dbReference type="ChEBI" id="CHEBI:58189"/>
        <dbReference type="ChEBI" id="CHEBI:132511"/>
        <dbReference type="ChEBI" id="CHEBI:132515"/>
        <dbReference type="EC" id="2.4.1.131"/>
    </reaction>
    <physiologicalReaction direction="left-to-right" evidence="1">
        <dbReference type="Rhea" id="RHEA:29524"/>
    </physiologicalReaction>
</comment>
<comment type="pathway">
    <text evidence="1">Protein modification; protein glycosylation.</text>
</comment>
<comment type="subcellular location">
    <subcellularLocation>
        <location evidence="1">Endoplasmic reticulum membrane</location>
        <topology evidence="1">Single-pass membrane protein</topology>
    </subcellularLocation>
</comment>
<comment type="similarity">
    <text evidence="3">Belongs to the glycosyltransferase group 1 family.</text>
</comment>
<reference key="1">
    <citation type="journal article" date="2004" name="Nature">
        <title>Genome evolution in yeasts.</title>
        <authorList>
            <person name="Dujon B."/>
            <person name="Sherman D."/>
            <person name="Fischer G."/>
            <person name="Durrens P."/>
            <person name="Casaregola S."/>
            <person name="Lafontaine I."/>
            <person name="de Montigny J."/>
            <person name="Marck C."/>
            <person name="Neuveglise C."/>
            <person name="Talla E."/>
            <person name="Goffard N."/>
            <person name="Frangeul L."/>
            <person name="Aigle M."/>
            <person name="Anthouard V."/>
            <person name="Babour A."/>
            <person name="Barbe V."/>
            <person name="Barnay S."/>
            <person name="Blanchin S."/>
            <person name="Beckerich J.-M."/>
            <person name="Beyne E."/>
            <person name="Bleykasten C."/>
            <person name="Boisrame A."/>
            <person name="Boyer J."/>
            <person name="Cattolico L."/>
            <person name="Confanioleri F."/>
            <person name="de Daruvar A."/>
            <person name="Despons L."/>
            <person name="Fabre E."/>
            <person name="Fairhead C."/>
            <person name="Ferry-Dumazet H."/>
            <person name="Groppi A."/>
            <person name="Hantraye F."/>
            <person name="Hennequin C."/>
            <person name="Jauniaux N."/>
            <person name="Joyet P."/>
            <person name="Kachouri R."/>
            <person name="Kerrest A."/>
            <person name="Koszul R."/>
            <person name="Lemaire M."/>
            <person name="Lesur I."/>
            <person name="Ma L."/>
            <person name="Muller H."/>
            <person name="Nicaud J.-M."/>
            <person name="Nikolski M."/>
            <person name="Oztas S."/>
            <person name="Ozier-Kalogeropoulos O."/>
            <person name="Pellenz S."/>
            <person name="Potier S."/>
            <person name="Richard G.-F."/>
            <person name="Straub M.-L."/>
            <person name="Suleau A."/>
            <person name="Swennen D."/>
            <person name="Tekaia F."/>
            <person name="Wesolowski-Louvel M."/>
            <person name="Westhof E."/>
            <person name="Wirth B."/>
            <person name="Zeniou-Meyer M."/>
            <person name="Zivanovic Y."/>
            <person name="Bolotin-Fukuhara M."/>
            <person name="Thierry A."/>
            <person name="Bouchier C."/>
            <person name="Caudron B."/>
            <person name="Scarpelli C."/>
            <person name="Gaillardin C."/>
            <person name="Weissenbach J."/>
            <person name="Wincker P."/>
            <person name="Souciet J.-L."/>
        </authorList>
    </citation>
    <scope>NUCLEOTIDE SEQUENCE [LARGE SCALE GENOMIC DNA]</scope>
    <source>
        <strain>ATCC 8585 / CBS 2359 / DSM 70799 / NBRC 1267 / NRRL Y-1140 / WM37</strain>
    </source>
</reference>
<dbReference type="EC" id="2.4.1.131" evidence="1"/>
<dbReference type="EMBL" id="CR382126">
    <property type="protein sequence ID" value="CAG97961.1"/>
    <property type="molecule type" value="Genomic_DNA"/>
</dbReference>
<dbReference type="RefSeq" id="XP_455253.1">
    <property type="nucleotide sequence ID" value="XM_455253.1"/>
</dbReference>
<dbReference type="FunCoup" id="Q6CLD6">
    <property type="interactions" value="427"/>
</dbReference>
<dbReference type="STRING" id="284590.Q6CLD6"/>
<dbReference type="CAZy" id="GT4">
    <property type="family name" value="Glycosyltransferase Family 4"/>
</dbReference>
<dbReference type="GlyCosmos" id="Q6CLD6">
    <property type="glycosylation" value="6 sites, No reported glycans"/>
</dbReference>
<dbReference type="PaxDb" id="284590-Q6CLD6"/>
<dbReference type="KEGG" id="kla:KLLA0_F03817g"/>
<dbReference type="eggNOG" id="KOG1387">
    <property type="taxonomic scope" value="Eukaryota"/>
</dbReference>
<dbReference type="HOGENOM" id="CLU_017896_1_1_1"/>
<dbReference type="InParanoid" id="Q6CLD6"/>
<dbReference type="OMA" id="WKHFTLI"/>
<dbReference type="UniPathway" id="UPA00378"/>
<dbReference type="Proteomes" id="UP000000598">
    <property type="component" value="Chromosome F"/>
</dbReference>
<dbReference type="GO" id="GO:0005789">
    <property type="term" value="C:endoplasmic reticulum membrane"/>
    <property type="evidence" value="ECO:0007669"/>
    <property type="project" value="UniProtKB-SubCell"/>
</dbReference>
<dbReference type="GO" id="GO:0004377">
    <property type="term" value="F:GDP-Man:Man3GlcNAc2-PP-Dol alpha-1,2-mannosyltransferase activity"/>
    <property type="evidence" value="ECO:0007669"/>
    <property type="project" value="UniProtKB-EC"/>
</dbReference>
<dbReference type="GO" id="GO:0006487">
    <property type="term" value="P:protein N-linked glycosylation"/>
    <property type="evidence" value="ECO:0007669"/>
    <property type="project" value="TreeGrafter"/>
</dbReference>
<dbReference type="CDD" id="cd03806">
    <property type="entry name" value="GT4_ALG11-like"/>
    <property type="match status" value="1"/>
</dbReference>
<dbReference type="Gene3D" id="3.40.50.2000">
    <property type="entry name" value="Glycogen Phosphorylase B"/>
    <property type="match status" value="1"/>
</dbReference>
<dbReference type="InterPro" id="IPR038013">
    <property type="entry name" value="ALG11"/>
</dbReference>
<dbReference type="InterPro" id="IPR031814">
    <property type="entry name" value="ALG11_N"/>
</dbReference>
<dbReference type="InterPro" id="IPR001296">
    <property type="entry name" value="Glyco_trans_1"/>
</dbReference>
<dbReference type="PANTHER" id="PTHR45919">
    <property type="entry name" value="GDP-MAN:MAN(3)GLCNAC(2)-PP-DOL ALPHA-1,2-MANNOSYLTRANSFERASE"/>
    <property type="match status" value="1"/>
</dbReference>
<dbReference type="PANTHER" id="PTHR45919:SF1">
    <property type="entry name" value="GDP-MAN:MAN(3)GLCNAC(2)-PP-DOL ALPHA-1,2-MANNOSYLTRANSFERASE"/>
    <property type="match status" value="1"/>
</dbReference>
<dbReference type="Pfam" id="PF15924">
    <property type="entry name" value="ALG11_N"/>
    <property type="match status" value="1"/>
</dbReference>
<dbReference type="Pfam" id="PF00534">
    <property type="entry name" value="Glycos_transf_1"/>
    <property type="match status" value="1"/>
</dbReference>
<dbReference type="SUPFAM" id="SSF53756">
    <property type="entry name" value="UDP-Glycosyltransferase/glycogen phosphorylase"/>
    <property type="match status" value="1"/>
</dbReference>
<keyword id="KW-0256">Endoplasmic reticulum</keyword>
<keyword id="KW-0328">Glycosyltransferase</keyword>
<keyword id="KW-0472">Membrane</keyword>
<keyword id="KW-1185">Reference proteome</keyword>
<keyword id="KW-0808">Transferase</keyword>
<keyword id="KW-0812">Transmembrane</keyword>
<keyword id="KW-1133">Transmembrane helix</keyword>
<proteinExistence type="inferred from homology"/>
<organism>
    <name type="scientific">Kluyveromyces lactis (strain ATCC 8585 / CBS 2359 / DSM 70799 / NBRC 1267 / NRRL Y-1140 / WM37)</name>
    <name type="common">Yeast</name>
    <name type="synonym">Candida sphaerica</name>
    <dbReference type="NCBI Taxonomy" id="284590"/>
    <lineage>
        <taxon>Eukaryota</taxon>
        <taxon>Fungi</taxon>
        <taxon>Dikarya</taxon>
        <taxon>Ascomycota</taxon>
        <taxon>Saccharomycotina</taxon>
        <taxon>Saccharomycetes</taxon>
        <taxon>Saccharomycetales</taxon>
        <taxon>Saccharomycetaceae</taxon>
        <taxon>Kluyveromyces</taxon>
    </lineage>
</organism>